<comment type="function">
    <text evidence="1">May be involved in specific transport of UDP-Gal from the cytosol to the Golgi lumen. Involved in the maintenance of optimal conditions for the folding of secretory pathway proteins in the endoplasmic reticulum (By similarity).</text>
</comment>
<comment type="subcellular location">
    <subcellularLocation>
        <location evidence="1">Endoplasmic reticulum membrane</location>
        <topology evidence="1">Multi-pass membrane protein</topology>
    </subcellularLocation>
</comment>
<comment type="similarity">
    <text evidence="3">Belongs to the nucleotide-sugar transporter family. SLC35B subfamily.</text>
</comment>
<protein>
    <recommendedName>
        <fullName>UDP-galactose transporter homolog 1</fullName>
    </recommendedName>
</protein>
<gene>
    <name type="primary">HUT1</name>
    <name type="ordered locus">KLLA0D12848g</name>
</gene>
<proteinExistence type="inferred from homology"/>
<feature type="chain" id="PRO_0000213410" description="UDP-galactose transporter homolog 1">
    <location>
        <begin position="1"/>
        <end position="339"/>
    </location>
</feature>
<feature type="transmembrane region" description="Helical" evidence="2">
    <location>
        <begin position="5"/>
        <end position="25"/>
    </location>
</feature>
<feature type="transmembrane region" description="Helical" evidence="2">
    <location>
        <begin position="43"/>
        <end position="63"/>
    </location>
</feature>
<feature type="transmembrane region" description="Helical" evidence="2">
    <location>
        <begin position="91"/>
        <end position="111"/>
    </location>
</feature>
<feature type="transmembrane region" description="Helical" evidence="2">
    <location>
        <begin position="138"/>
        <end position="158"/>
    </location>
</feature>
<feature type="transmembrane region" description="Helical" evidence="2">
    <location>
        <begin position="171"/>
        <end position="191"/>
    </location>
</feature>
<feature type="transmembrane region" description="Helical" evidence="2">
    <location>
        <begin position="208"/>
        <end position="228"/>
    </location>
</feature>
<feature type="transmembrane region" description="Helical" evidence="2">
    <location>
        <begin position="246"/>
        <end position="268"/>
    </location>
</feature>
<feature type="transmembrane region" description="Helical" evidence="2">
    <location>
        <begin position="273"/>
        <end position="295"/>
    </location>
</feature>
<feature type="transmembrane region" description="Helical" evidence="2">
    <location>
        <begin position="301"/>
        <end position="321"/>
    </location>
</feature>
<keyword id="KW-0256">Endoplasmic reticulum</keyword>
<keyword id="KW-0472">Membrane</keyword>
<keyword id="KW-1185">Reference proteome</keyword>
<keyword id="KW-0762">Sugar transport</keyword>
<keyword id="KW-0812">Transmembrane</keyword>
<keyword id="KW-1133">Transmembrane helix</keyword>
<keyword id="KW-0813">Transport</keyword>
<evidence type="ECO:0000250" key="1"/>
<evidence type="ECO:0000255" key="2"/>
<evidence type="ECO:0000305" key="3"/>
<organism>
    <name type="scientific">Kluyveromyces lactis (strain ATCC 8585 / CBS 2359 / DSM 70799 / NBRC 1267 / NRRL Y-1140 / WM37)</name>
    <name type="common">Yeast</name>
    <name type="synonym">Candida sphaerica</name>
    <dbReference type="NCBI Taxonomy" id="284590"/>
    <lineage>
        <taxon>Eukaryota</taxon>
        <taxon>Fungi</taxon>
        <taxon>Dikarya</taxon>
        <taxon>Ascomycota</taxon>
        <taxon>Saccharomycotina</taxon>
        <taxon>Saccharomycetes</taxon>
        <taxon>Saccharomycetales</taxon>
        <taxon>Saccharomycetaceae</taxon>
        <taxon>Kluyveromyces</taxon>
    </lineage>
</organism>
<accession>Q6CR04</accession>
<reference key="1">
    <citation type="journal article" date="2004" name="Nature">
        <title>Genome evolution in yeasts.</title>
        <authorList>
            <person name="Dujon B."/>
            <person name="Sherman D."/>
            <person name="Fischer G."/>
            <person name="Durrens P."/>
            <person name="Casaregola S."/>
            <person name="Lafontaine I."/>
            <person name="de Montigny J."/>
            <person name="Marck C."/>
            <person name="Neuveglise C."/>
            <person name="Talla E."/>
            <person name="Goffard N."/>
            <person name="Frangeul L."/>
            <person name="Aigle M."/>
            <person name="Anthouard V."/>
            <person name="Babour A."/>
            <person name="Barbe V."/>
            <person name="Barnay S."/>
            <person name="Blanchin S."/>
            <person name="Beckerich J.-M."/>
            <person name="Beyne E."/>
            <person name="Bleykasten C."/>
            <person name="Boisrame A."/>
            <person name="Boyer J."/>
            <person name="Cattolico L."/>
            <person name="Confanioleri F."/>
            <person name="de Daruvar A."/>
            <person name="Despons L."/>
            <person name="Fabre E."/>
            <person name="Fairhead C."/>
            <person name="Ferry-Dumazet H."/>
            <person name="Groppi A."/>
            <person name="Hantraye F."/>
            <person name="Hennequin C."/>
            <person name="Jauniaux N."/>
            <person name="Joyet P."/>
            <person name="Kachouri R."/>
            <person name="Kerrest A."/>
            <person name="Koszul R."/>
            <person name="Lemaire M."/>
            <person name="Lesur I."/>
            <person name="Ma L."/>
            <person name="Muller H."/>
            <person name="Nicaud J.-M."/>
            <person name="Nikolski M."/>
            <person name="Oztas S."/>
            <person name="Ozier-Kalogeropoulos O."/>
            <person name="Pellenz S."/>
            <person name="Potier S."/>
            <person name="Richard G.-F."/>
            <person name="Straub M.-L."/>
            <person name="Suleau A."/>
            <person name="Swennen D."/>
            <person name="Tekaia F."/>
            <person name="Wesolowski-Louvel M."/>
            <person name="Westhof E."/>
            <person name="Wirth B."/>
            <person name="Zeniou-Meyer M."/>
            <person name="Zivanovic Y."/>
            <person name="Bolotin-Fukuhara M."/>
            <person name="Thierry A."/>
            <person name="Bouchier C."/>
            <person name="Caudron B."/>
            <person name="Scarpelli C."/>
            <person name="Gaillardin C."/>
            <person name="Weissenbach J."/>
            <person name="Wincker P."/>
            <person name="Souciet J.-L."/>
        </authorList>
    </citation>
    <scope>NUCLEOTIDE SEQUENCE [LARGE SCALE GENOMIC DNA]</scope>
    <source>
        <strain>ATCC 8585 / CBS 2359 / DSM 70799 / NBRC 1267 / NRRL Y-1140 / WM37</strain>
    </source>
</reference>
<dbReference type="EMBL" id="CR382124">
    <property type="protein sequence ID" value="CAH00731.1"/>
    <property type="molecule type" value="Genomic_DNA"/>
</dbReference>
<dbReference type="RefSeq" id="XP_453635.1">
    <property type="nucleotide sequence ID" value="XM_453635.1"/>
</dbReference>
<dbReference type="SMR" id="Q6CR04"/>
<dbReference type="FunCoup" id="Q6CR04">
    <property type="interactions" value="478"/>
</dbReference>
<dbReference type="STRING" id="284590.Q6CR04"/>
<dbReference type="PaxDb" id="284590-Q6CR04"/>
<dbReference type="KEGG" id="kla:KLLA0_D12848g"/>
<dbReference type="eggNOG" id="KOG1581">
    <property type="taxonomic scope" value="Eukaryota"/>
</dbReference>
<dbReference type="HOGENOM" id="CLU_036019_0_2_1"/>
<dbReference type="InParanoid" id="Q6CR04"/>
<dbReference type="OMA" id="KIMTQHY"/>
<dbReference type="Proteomes" id="UP000000598">
    <property type="component" value="Chromosome D"/>
</dbReference>
<dbReference type="GO" id="GO:0005789">
    <property type="term" value="C:endoplasmic reticulum membrane"/>
    <property type="evidence" value="ECO:0007669"/>
    <property type="project" value="UniProtKB-SubCell"/>
</dbReference>
<dbReference type="GO" id="GO:0000139">
    <property type="term" value="C:Golgi membrane"/>
    <property type="evidence" value="ECO:0007669"/>
    <property type="project" value="TreeGrafter"/>
</dbReference>
<dbReference type="GO" id="GO:0005459">
    <property type="term" value="F:UDP-galactose transmembrane transporter activity"/>
    <property type="evidence" value="ECO:0007669"/>
    <property type="project" value="TreeGrafter"/>
</dbReference>
<dbReference type="GO" id="GO:0005460">
    <property type="term" value="F:UDP-glucose transmembrane transporter activity"/>
    <property type="evidence" value="ECO:0007669"/>
    <property type="project" value="TreeGrafter"/>
</dbReference>
<dbReference type="InterPro" id="IPR013657">
    <property type="entry name" value="SCL35B1-4/HUT1"/>
</dbReference>
<dbReference type="PANTHER" id="PTHR10778">
    <property type="entry name" value="SOLUTE CARRIER FAMILY 35 MEMBER B"/>
    <property type="match status" value="1"/>
</dbReference>
<dbReference type="PANTHER" id="PTHR10778:SF10">
    <property type="entry name" value="SOLUTE CARRIER FAMILY 35 MEMBER B1"/>
    <property type="match status" value="1"/>
</dbReference>
<dbReference type="Pfam" id="PF08449">
    <property type="entry name" value="UAA"/>
    <property type="match status" value="1"/>
</dbReference>
<dbReference type="SUPFAM" id="SSF103481">
    <property type="entry name" value="Multidrug resistance efflux transporter EmrE"/>
    <property type="match status" value="1"/>
</dbReference>
<name>HUT1_KLULA</name>
<sequence length="339" mass="37918">MGRHILKHVFAVGGIYCSFLTWGLLQEPLNTRVWPNSGCTFQVPYIVALVQATIAMICGLIYIKWQKPVLSLSKFWTSHTRDMAIISLSQAISAPLAAYSLSYVDFLTYMLAKSCKLLPVLMVHLIVYRTPIPRSKKLVVLLVTVGITIFTLDGHKPSMTENDVSESSSSSSLIGFVLLGSSLFLDGLTNAKQDKLFQKATYKITGAHLMFALNFFLIVWNVIYMVLVDRQQLAKGLKMLHADPEISRYLLAYACCGAIGQCFIFYTLEQYGSLVLVMVTVTRKMFSMILSIIVYGHQVTLWQWVGIVIVFTGVVCESMGKKNKAKEGNIINEEKVKQS</sequence>